<name>PDXB_SALPA</name>
<organism>
    <name type="scientific">Salmonella paratyphi A (strain ATCC 9150 / SARB42)</name>
    <dbReference type="NCBI Taxonomy" id="295319"/>
    <lineage>
        <taxon>Bacteria</taxon>
        <taxon>Pseudomonadati</taxon>
        <taxon>Pseudomonadota</taxon>
        <taxon>Gammaproteobacteria</taxon>
        <taxon>Enterobacterales</taxon>
        <taxon>Enterobacteriaceae</taxon>
        <taxon>Salmonella</taxon>
    </lineage>
</organism>
<dbReference type="EC" id="1.1.1.290" evidence="1"/>
<dbReference type="EMBL" id="CP000026">
    <property type="protein sequence ID" value="AAV76496.1"/>
    <property type="molecule type" value="Genomic_DNA"/>
</dbReference>
<dbReference type="RefSeq" id="WP_000699180.1">
    <property type="nucleotide sequence ID" value="NC_006511.1"/>
</dbReference>
<dbReference type="SMR" id="Q5PCV8"/>
<dbReference type="KEGG" id="spt:SPA0494"/>
<dbReference type="HOGENOM" id="CLU_019796_4_0_6"/>
<dbReference type="UniPathway" id="UPA00244">
    <property type="reaction ID" value="UER00310"/>
</dbReference>
<dbReference type="Proteomes" id="UP000008185">
    <property type="component" value="Chromosome"/>
</dbReference>
<dbReference type="GO" id="GO:0005829">
    <property type="term" value="C:cytosol"/>
    <property type="evidence" value="ECO:0007669"/>
    <property type="project" value="TreeGrafter"/>
</dbReference>
<dbReference type="GO" id="GO:0033711">
    <property type="term" value="F:4-phosphoerythronate dehydrogenase activity"/>
    <property type="evidence" value="ECO:0007669"/>
    <property type="project" value="UniProtKB-EC"/>
</dbReference>
<dbReference type="GO" id="GO:0051287">
    <property type="term" value="F:NAD binding"/>
    <property type="evidence" value="ECO:0007669"/>
    <property type="project" value="InterPro"/>
</dbReference>
<dbReference type="GO" id="GO:0046983">
    <property type="term" value="F:protein dimerization activity"/>
    <property type="evidence" value="ECO:0007669"/>
    <property type="project" value="InterPro"/>
</dbReference>
<dbReference type="GO" id="GO:0036001">
    <property type="term" value="P:'de novo' pyridoxal 5'-phosphate biosynthetic process"/>
    <property type="evidence" value="ECO:0007669"/>
    <property type="project" value="TreeGrafter"/>
</dbReference>
<dbReference type="GO" id="GO:0008615">
    <property type="term" value="P:pyridoxine biosynthetic process"/>
    <property type="evidence" value="ECO:0007669"/>
    <property type="project" value="UniProtKB-UniRule"/>
</dbReference>
<dbReference type="CDD" id="cd12158">
    <property type="entry name" value="ErythrP_dh"/>
    <property type="match status" value="1"/>
</dbReference>
<dbReference type="FunFam" id="3.30.1370.170:FF:000001">
    <property type="entry name" value="Erythronate-4-phosphate dehydrogenase"/>
    <property type="match status" value="1"/>
</dbReference>
<dbReference type="FunFam" id="3.40.50.720:FF:000093">
    <property type="entry name" value="Erythronate-4-phosphate dehydrogenase"/>
    <property type="match status" value="1"/>
</dbReference>
<dbReference type="Gene3D" id="3.30.1370.170">
    <property type="match status" value="1"/>
</dbReference>
<dbReference type="Gene3D" id="3.40.50.720">
    <property type="entry name" value="NAD(P)-binding Rossmann-like Domain"/>
    <property type="match status" value="2"/>
</dbReference>
<dbReference type="HAMAP" id="MF_01825">
    <property type="entry name" value="PdxB"/>
    <property type="match status" value="1"/>
</dbReference>
<dbReference type="InterPro" id="IPR006139">
    <property type="entry name" value="D-isomer_2_OHA_DH_cat_dom"/>
</dbReference>
<dbReference type="InterPro" id="IPR029753">
    <property type="entry name" value="D-isomer_DH_CS"/>
</dbReference>
<dbReference type="InterPro" id="IPR029752">
    <property type="entry name" value="D-isomer_DH_CS1"/>
</dbReference>
<dbReference type="InterPro" id="IPR006140">
    <property type="entry name" value="D-isomer_DH_NAD-bd"/>
</dbReference>
<dbReference type="InterPro" id="IPR020921">
    <property type="entry name" value="Erythronate-4-P_DHase"/>
</dbReference>
<dbReference type="InterPro" id="IPR024531">
    <property type="entry name" value="Erythronate-4-P_DHase_dimer"/>
</dbReference>
<dbReference type="InterPro" id="IPR036291">
    <property type="entry name" value="NAD(P)-bd_dom_sf"/>
</dbReference>
<dbReference type="InterPro" id="IPR038251">
    <property type="entry name" value="PdxB_dimer_sf"/>
</dbReference>
<dbReference type="NCBIfam" id="NF001309">
    <property type="entry name" value="PRK00257.1"/>
    <property type="match status" value="1"/>
</dbReference>
<dbReference type="NCBIfam" id="NF011966">
    <property type="entry name" value="PRK15438.1"/>
    <property type="match status" value="1"/>
</dbReference>
<dbReference type="PANTHER" id="PTHR42938">
    <property type="entry name" value="FORMATE DEHYDROGENASE 1"/>
    <property type="match status" value="1"/>
</dbReference>
<dbReference type="PANTHER" id="PTHR42938:SF9">
    <property type="entry name" value="FORMATE DEHYDROGENASE 1"/>
    <property type="match status" value="1"/>
</dbReference>
<dbReference type="Pfam" id="PF00389">
    <property type="entry name" value="2-Hacid_dh"/>
    <property type="match status" value="1"/>
</dbReference>
<dbReference type="Pfam" id="PF02826">
    <property type="entry name" value="2-Hacid_dh_C"/>
    <property type="match status" value="1"/>
</dbReference>
<dbReference type="Pfam" id="PF11890">
    <property type="entry name" value="DUF3410"/>
    <property type="match status" value="1"/>
</dbReference>
<dbReference type="SUPFAM" id="SSF52283">
    <property type="entry name" value="Formate/glycerate dehydrogenase catalytic domain-like"/>
    <property type="match status" value="1"/>
</dbReference>
<dbReference type="SUPFAM" id="SSF51735">
    <property type="entry name" value="NAD(P)-binding Rossmann-fold domains"/>
    <property type="match status" value="1"/>
</dbReference>
<dbReference type="PROSITE" id="PS00065">
    <property type="entry name" value="D_2_HYDROXYACID_DH_1"/>
    <property type="match status" value="1"/>
</dbReference>
<dbReference type="PROSITE" id="PS00671">
    <property type="entry name" value="D_2_HYDROXYACID_DH_3"/>
    <property type="match status" value="1"/>
</dbReference>
<evidence type="ECO:0000255" key="1">
    <source>
        <dbReference type="HAMAP-Rule" id="MF_01825"/>
    </source>
</evidence>
<accession>Q5PCV8</accession>
<feature type="chain" id="PRO_0000297464" description="Erythronate-4-phosphate dehydrogenase">
    <location>
        <begin position="1"/>
        <end position="378"/>
    </location>
</feature>
<feature type="active site" evidence="1">
    <location>
        <position position="208"/>
    </location>
</feature>
<feature type="active site" evidence="1">
    <location>
        <position position="237"/>
    </location>
</feature>
<feature type="active site" description="Proton donor" evidence="1">
    <location>
        <position position="254"/>
    </location>
</feature>
<feature type="binding site" evidence="1">
    <location>
        <position position="45"/>
    </location>
    <ligand>
        <name>substrate</name>
    </ligand>
</feature>
<feature type="binding site" evidence="1">
    <location>
        <position position="66"/>
    </location>
    <ligand>
        <name>substrate</name>
    </ligand>
</feature>
<feature type="binding site" evidence="1">
    <location>
        <position position="146"/>
    </location>
    <ligand>
        <name>NAD(+)</name>
        <dbReference type="ChEBI" id="CHEBI:57540"/>
    </ligand>
</feature>
<feature type="binding site" evidence="1">
    <location>
        <position position="175"/>
    </location>
    <ligand>
        <name>NAD(+)</name>
        <dbReference type="ChEBI" id="CHEBI:57540"/>
    </ligand>
</feature>
<feature type="binding site" evidence="1">
    <location>
        <position position="232"/>
    </location>
    <ligand>
        <name>NAD(+)</name>
        <dbReference type="ChEBI" id="CHEBI:57540"/>
    </ligand>
</feature>
<feature type="binding site" evidence="1">
    <location>
        <position position="257"/>
    </location>
    <ligand>
        <name>NAD(+)</name>
        <dbReference type="ChEBI" id="CHEBI:57540"/>
    </ligand>
</feature>
<feature type="binding site" evidence="1">
    <location>
        <position position="258"/>
    </location>
    <ligand>
        <name>substrate</name>
    </ligand>
</feature>
<gene>
    <name evidence="1" type="primary">pdxB</name>
    <name type="ordered locus">SPA0494</name>
</gene>
<sequence>MKILVDENMPYARELFSRLGEVKAVPGRPIPVEELNHADALMVRSVTKVNESLLSGTPINFVGTATAGTDHVDEAWLKQAGIGFSAAPGCNAIAVVEYVFSALLMLAERDGFSLRDRTIGIVGVGNVGSRLQTRLEALGIRTLLCDPPRAARGDEGDFRTLDELVQEADVLTFHTPLYKDGPYKTLHLADETLIRRLKPGVILINACRGPVVDNAALLARLNAGQPLSVVLDVWEGEPDLNVALLEAVDIGTSHIAGYTLEGKARGTTQVFEAYSAFIGREQRVALETLLPAPEFDRITLHGPLDQPTLKRLAHLVYDVRRDDAPLRKVAGIPGEFDKLRKNYLERREWSSLYVMCDDETAAALLCKLGFNAVHHPAH</sequence>
<reference key="1">
    <citation type="journal article" date="2004" name="Nat. Genet.">
        <title>Comparison of genome degradation in Paratyphi A and Typhi, human-restricted serovars of Salmonella enterica that cause typhoid.</title>
        <authorList>
            <person name="McClelland M."/>
            <person name="Sanderson K.E."/>
            <person name="Clifton S.W."/>
            <person name="Latreille P."/>
            <person name="Porwollik S."/>
            <person name="Sabo A."/>
            <person name="Meyer R."/>
            <person name="Bieri T."/>
            <person name="Ozersky P."/>
            <person name="McLellan M."/>
            <person name="Harkins C.R."/>
            <person name="Wang C."/>
            <person name="Nguyen C."/>
            <person name="Berghoff A."/>
            <person name="Elliott G."/>
            <person name="Kohlberg S."/>
            <person name="Strong C."/>
            <person name="Du F."/>
            <person name="Carter J."/>
            <person name="Kremizki C."/>
            <person name="Layman D."/>
            <person name="Leonard S."/>
            <person name="Sun H."/>
            <person name="Fulton L."/>
            <person name="Nash W."/>
            <person name="Miner T."/>
            <person name="Minx P."/>
            <person name="Delehaunty K."/>
            <person name="Fronick C."/>
            <person name="Magrini V."/>
            <person name="Nhan M."/>
            <person name="Warren W."/>
            <person name="Florea L."/>
            <person name="Spieth J."/>
            <person name="Wilson R.K."/>
        </authorList>
    </citation>
    <scope>NUCLEOTIDE SEQUENCE [LARGE SCALE GENOMIC DNA]</scope>
    <source>
        <strain>ATCC 9150 / SARB42</strain>
    </source>
</reference>
<keyword id="KW-0963">Cytoplasm</keyword>
<keyword id="KW-0520">NAD</keyword>
<keyword id="KW-0560">Oxidoreductase</keyword>
<keyword id="KW-0664">Pyridoxine biosynthesis</keyword>
<protein>
    <recommendedName>
        <fullName evidence="1">Erythronate-4-phosphate dehydrogenase</fullName>
        <ecNumber evidence="1">1.1.1.290</ecNumber>
    </recommendedName>
</protein>
<comment type="function">
    <text evidence="1">Catalyzes the oxidation of erythronate-4-phosphate to 3-hydroxy-2-oxo-4-phosphonooxybutanoate.</text>
</comment>
<comment type="catalytic activity">
    <reaction evidence="1">
        <text>4-phospho-D-erythronate + NAD(+) = (R)-3-hydroxy-2-oxo-4-phosphooxybutanoate + NADH + H(+)</text>
        <dbReference type="Rhea" id="RHEA:18829"/>
        <dbReference type="ChEBI" id="CHEBI:15378"/>
        <dbReference type="ChEBI" id="CHEBI:57540"/>
        <dbReference type="ChEBI" id="CHEBI:57945"/>
        <dbReference type="ChEBI" id="CHEBI:58538"/>
        <dbReference type="ChEBI" id="CHEBI:58766"/>
        <dbReference type="EC" id="1.1.1.290"/>
    </reaction>
</comment>
<comment type="pathway">
    <text evidence="1">Cofactor biosynthesis; pyridoxine 5'-phosphate biosynthesis; pyridoxine 5'-phosphate from D-erythrose 4-phosphate: step 2/5.</text>
</comment>
<comment type="subunit">
    <text evidence="1">Homodimer.</text>
</comment>
<comment type="subcellular location">
    <subcellularLocation>
        <location evidence="1">Cytoplasm</location>
    </subcellularLocation>
</comment>
<comment type="similarity">
    <text evidence="1">Belongs to the D-isomer specific 2-hydroxyacid dehydrogenase family. PdxB subfamily.</text>
</comment>
<proteinExistence type="inferred from homology"/>